<dbReference type="EC" id="2.5.1.61"/>
<dbReference type="EMBL" id="CR382138">
    <property type="protein sequence ID" value="CAG89089.1"/>
    <property type="molecule type" value="Genomic_DNA"/>
</dbReference>
<dbReference type="RefSeq" id="XP_460748.1">
    <property type="nucleotide sequence ID" value="XM_460748.1"/>
</dbReference>
<dbReference type="SMR" id="Q6BM23"/>
<dbReference type="FunCoup" id="Q6BM23">
    <property type="interactions" value="683"/>
</dbReference>
<dbReference type="STRING" id="284592.Q6BM23"/>
<dbReference type="GeneID" id="2903764"/>
<dbReference type="KEGG" id="dha:DEHA2F08888g"/>
<dbReference type="VEuPathDB" id="FungiDB:DEHA2F08888g"/>
<dbReference type="eggNOG" id="KOG2892">
    <property type="taxonomic scope" value="Eukaryota"/>
</dbReference>
<dbReference type="HOGENOM" id="CLU_019704_0_2_1"/>
<dbReference type="InParanoid" id="Q6BM23"/>
<dbReference type="OMA" id="NAHEWAG"/>
<dbReference type="OrthoDB" id="564646at2759"/>
<dbReference type="UniPathway" id="UPA00251">
    <property type="reaction ID" value="UER00319"/>
</dbReference>
<dbReference type="Proteomes" id="UP000000599">
    <property type="component" value="Chromosome F"/>
</dbReference>
<dbReference type="GO" id="GO:0005737">
    <property type="term" value="C:cytoplasm"/>
    <property type="evidence" value="ECO:0007669"/>
    <property type="project" value="TreeGrafter"/>
</dbReference>
<dbReference type="GO" id="GO:0004418">
    <property type="term" value="F:hydroxymethylbilane synthase activity"/>
    <property type="evidence" value="ECO:0007669"/>
    <property type="project" value="UniProtKB-EC"/>
</dbReference>
<dbReference type="GO" id="GO:0006782">
    <property type="term" value="P:protoporphyrinogen IX biosynthetic process"/>
    <property type="evidence" value="ECO:0007669"/>
    <property type="project" value="UniProtKB-UniPathway"/>
</dbReference>
<dbReference type="CDD" id="cd13645">
    <property type="entry name" value="PBP2_HuPBGD_like"/>
    <property type="match status" value="1"/>
</dbReference>
<dbReference type="FunFam" id="3.30.160.40:FF:000002">
    <property type="entry name" value="Porphobilinogen deaminase"/>
    <property type="match status" value="1"/>
</dbReference>
<dbReference type="FunFam" id="3.40.190.10:FF:000005">
    <property type="entry name" value="Porphobilinogen deaminase"/>
    <property type="match status" value="1"/>
</dbReference>
<dbReference type="Gene3D" id="3.40.190.10">
    <property type="entry name" value="Periplasmic binding protein-like II"/>
    <property type="match status" value="2"/>
</dbReference>
<dbReference type="Gene3D" id="3.30.160.40">
    <property type="entry name" value="Porphobilinogen deaminase, C-terminal domain"/>
    <property type="match status" value="1"/>
</dbReference>
<dbReference type="InterPro" id="IPR000860">
    <property type="entry name" value="HemC"/>
</dbReference>
<dbReference type="InterPro" id="IPR022419">
    <property type="entry name" value="Porphobilin_deaminase_cofac_BS"/>
</dbReference>
<dbReference type="InterPro" id="IPR022417">
    <property type="entry name" value="Porphobilin_deaminase_N"/>
</dbReference>
<dbReference type="InterPro" id="IPR022418">
    <property type="entry name" value="Porphobilinogen_deaminase_C"/>
</dbReference>
<dbReference type="InterPro" id="IPR036803">
    <property type="entry name" value="Porphobilinogen_deaminase_C_sf"/>
</dbReference>
<dbReference type="NCBIfam" id="TIGR00212">
    <property type="entry name" value="hemC"/>
    <property type="match status" value="1"/>
</dbReference>
<dbReference type="PANTHER" id="PTHR11557">
    <property type="entry name" value="PORPHOBILINOGEN DEAMINASE"/>
    <property type="match status" value="1"/>
</dbReference>
<dbReference type="PANTHER" id="PTHR11557:SF0">
    <property type="entry name" value="PORPHOBILINOGEN DEAMINASE"/>
    <property type="match status" value="1"/>
</dbReference>
<dbReference type="Pfam" id="PF01379">
    <property type="entry name" value="Porphobil_deam"/>
    <property type="match status" value="1"/>
</dbReference>
<dbReference type="Pfam" id="PF03900">
    <property type="entry name" value="Porphobil_deamC"/>
    <property type="match status" value="1"/>
</dbReference>
<dbReference type="PIRSF" id="PIRSF001438">
    <property type="entry name" value="4pyrrol_synth_OHMeBilane_synth"/>
    <property type="match status" value="1"/>
</dbReference>
<dbReference type="PRINTS" id="PR00151">
    <property type="entry name" value="PORPHBDMNASE"/>
</dbReference>
<dbReference type="SUPFAM" id="SSF53850">
    <property type="entry name" value="Periplasmic binding protein-like II"/>
    <property type="match status" value="1"/>
</dbReference>
<dbReference type="SUPFAM" id="SSF54782">
    <property type="entry name" value="Porphobilinogen deaminase (hydroxymethylbilane synthase), C-terminal domain"/>
    <property type="match status" value="1"/>
</dbReference>
<dbReference type="PROSITE" id="PS00533">
    <property type="entry name" value="PORPHOBILINOGEN_DEAM"/>
    <property type="match status" value="1"/>
</dbReference>
<proteinExistence type="inferred from homology"/>
<accession>Q6BM23</accession>
<protein>
    <recommendedName>
        <fullName>Porphobilinogen deaminase</fullName>
        <shortName>PBG</shortName>
        <ecNumber>2.5.1.61</ecNumber>
    </recommendedName>
    <alternativeName>
        <fullName>Hydroxymethylbilane synthase</fullName>
        <shortName>HMBS</shortName>
    </alternativeName>
    <alternativeName>
        <fullName>Pre-uroporphyrinogen synthase</fullName>
    </alternativeName>
</protein>
<keyword id="KW-0350">Heme biosynthesis</keyword>
<keyword id="KW-0627">Porphyrin biosynthesis</keyword>
<keyword id="KW-1185">Reference proteome</keyword>
<keyword id="KW-0808">Transferase</keyword>
<gene>
    <name type="primary">HEM3</name>
    <name type="ordered locus">DEHA2F08888g</name>
</gene>
<sequence>MPHNTKSMDNTLNIKDNHVQIGGRKSKLAVVQSEIVKECIVEKFPELSCSVLALSTLGDKVQSKPLYSFGGKALWTKELEILLLEQVEEYPRLDLIVHSLKDIPTNLPEEFELGCILNREDARDALVMKSGSSYKSLADLPDGSLVGTSSVRRSSQLLKNHPKLRFDSVRGNLQTRLNKLDDENSPFECLLLASAGLIRIGLGDRITAHLDAPEMYYAVGQGALGIEIRKGDEKMLQLLKTIEDLPTTYCCLAERSLMRHLEGGCSVPIGVQSHYNESTNELSLKAIIVSPDGIHFVEDEYKGVVNNKDDADAIGIKVGDLLSAKGGREILNSINFERINLPPSSNTPTPQPITPITTNNS</sequence>
<reference key="1">
    <citation type="journal article" date="2004" name="Nature">
        <title>Genome evolution in yeasts.</title>
        <authorList>
            <person name="Dujon B."/>
            <person name="Sherman D."/>
            <person name="Fischer G."/>
            <person name="Durrens P."/>
            <person name="Casaregola S."/>
            <person name="Lafontaine I."/>
            <person name="de Montigny J."/>
            <person name="Marck C."/>
            <person name="Neuveglise C."/>
            <person name="Talla E."/>
            <person name="Goffard N."/>
            <person name="Frangeul L."/>
            <person name="Aigle M."/>
            <person name="Anthouard V."/>
            <person name="Babour A."/>
            <person name="Barbe V."/>
            <person name="Barnay S."/>
            <person name="Blanchin S."/>
            <person name="Beckerich J.-M."/>
            <person name="Beyne E."/>
            <person name="Bleykasten C."/>
            <person name="Boisrame A."/>
            <person name="Boyer J."/>
            <person name="Cattolico L."/>
            <person name="Confanioleri F."/>
            <person name="de Daruvar A."/>
            <person name="Despons L."/>
            <person name="Fabre E."/>
            <person name="Fairhead C."/>
            <person name="Ferry-Dumazet H."/>
            <person name="Groppi A."/>
            <person name="Hantraye F."/>
            <person name="Hennequin C."/>
            <person name="Jauniaux N."/>
            <person name="Joyet P."/>
            <person name="Kachouri R."/>
            <person name="Kerrest A."/>
            <person name="Koszul R."/>
            <person name="Lemaire M."/>
            <person name="Lesur I."/>
            <person name="Ma L."/>
            <person name="Muller H."/>
            <person name="Nicaud J.-M."/>
            <person name="Nikolski M."/>
            <person name="Oztas S."/>
            <person name="Ozier-Kalogeropoulos O."/>
            <person name="Pellenz S."/>
            <person name="Potier S."/>
            <person name="Richard G.-F."/>
            <person name="Straub M.-L."/>
            <person name="Suleau A."/>
            <person name="Swennen D."/>
            <person name="Tekaia F."/>
            <person name="Wesolowski-Louvel M."/>
            <person name="Westhof E."/>
            <person name="Wirth B."/>
            <person name="Zeniou-Meyer M."/>
            <person name="Zivanovic Y."/>
            <person name="Bolotin-Fukuhara M."/>
            <person name="Thierry A."/>
            <person name="Bouchier C."/>
            <person name="Caudron B."/>
            <person name="Scarpelli C."/>
            <person name="Gaillardin C."/>
            <person name="Weissenbach J."/>
            <person name="Wincker P."/>
            <person name="Souciet J.-L."/>
        </authorList>
    </citation>
    <scope>NUCLEOTIDE SEQUENCE [LARGE SCALE GENOMIC DNA]</scope>
    <source>
        <strain>ATCC 36239 / CBS 767 / BCRC 21394 / JCM 1990 / NBRC 0083 / IGC 2968</strain>
    </source>
</reference>
<name>HEM3_DEBHA</name>
<comment type="function">
    <text evidence="1">Tetrapolymerization of the monopyrrole PBG into the hydroxymethylbilane pre-uroporphyrinogen in several discrete steps.</text>
</comment>
<comment type="catalytic activity">
    <reaction>
        <text>4 porphobilinogen + H2O = hydroxymethylbilane + 4 NH4(+)</text>
        <dbReference type="Rhea" id="RHEA:13185"/>
        <dbReference type="ChEBI" id="CHEBI:15377"/>
        <dbReference type="ChEBI" id="CHEBI:28938"/>
        <dbReference type="ChEBI" id="CHEBI:57845"/>
        <dbReference type="ChEBI" id="CHEBI:58126"/>
        <dbReference type="EC" id="2.5.1.61"/>
    </reaction>
</comment>
<comment type="cofactor">
    <cofactor evidence="1">
        <name>dipyrromethane</name>
        <dbReference type="ChEBI" id="CHEBI:60342"/>
    </cofactor>
    <text evidence="1">Binds 1 dipyrromethane group covalently.</text>
</comment>
<comment type="pathway">
    <text>Porphyrin-containing compound metabolism; protoporphyrin-IX biosynthesis; coproporphyrinogen-III from 5-aminolevulinate: step 2/4.</text>
</comment>
<comment type="miscellaneous">
    <text>The porphobilinogen subunits are added to the dipyrromethan group.</text>
</comment>
<comment type="similarity">
    <text evidence="3">Belongs to the HMBS family.</text>
</comment>
<feature type="chain" id="PRO_0000143040" description="Porphobilinogen deaminase">
    <location>
        <begin position="1"/>
        <end position="361"/>
    </location>
</feature>
<feature type="region of interest" description="Disordered" evidence="2">
    <location>
        <begin position="341"/>
        <end position="361"/>
    </location>
</feature>
<feature type="modified residue" description="S-(dipyrrolylmethanemethyl)cysteine" evidence="1">
    <location>
        <position position="265"/>
    </location>
</feature>
<organism>
    <name type="scientific">Debaryomyces hansenii (strain ATCC 36239 / CBS 767 / BCRC 21394 / JCM 1990 / NBRC 0083 / IGC 2968)</name>
    <name type="common">Yeast</name>
    <name type="synonym">Torulaspora hansenii</name>
    <dbReference type="NCBI Taxonomy" id="284592"/>
    <lineage>
        <taxon>Eukaryota</taxon>
        <taxon>Fungi</taxon>
        <taxon>Dikarya</taxon>
        <taxon>Ascomycota</taxon>
        <taxon>Saccharomycotina</taxon>
        <taxon>Pichiomycetes</taxon>
        <taxon>Debaryomycetaceae</taxon>
        <taxon>Debaryomyces</taxon>
    </lineage>
</organism>
<evidence type="ECO:0000250" key="1"/>
<evidence type="ECO:0000256" key="2">
    <source>
        <dbReference type="SAM" id="MobiDB-lite"/>
    </source>
</evidence>
<evidence type="ECO:0000305" key="3"/>